<gene>
    <name evidence="1" type="primary">pyrI</name>
    <name type="ordered locus">ECS88_4834</name>
</gene>
<organism>
    <name type="scientific">Escherichia coli O45:K1 (strain S88 / ExPEC)</name>
    <dbReference type="NCBI Taxonomy" id="585035"/>
    <lineage>
        <taxon>Bacteria</taxon>
        <taxon>Pseudomonadati</taxon>
        <taxon>Pseudomonadota</taxon>
        <taxon>Gammaproteobacteria</taxon>
        <taxon>Enterobacterales</taxon>
        <taxon>Enterobacteriaceae</taxon>
        <taxon>Escherichia</taxon>
    </lineage>
</organism>
<name>PYRI_ECO45</name>
<protein>
    <recommendedName>
        <fullName evidence="1">Aspartate carbamoyltransferase regulatory chain</fullName>
    </recommendedName>
</protein>
<reference key="1">
    <citation type="journal article" date="2009" name="PLoS Genet.">
        <title>Organised genome dynamics in the Escherichia coli species results in highly diverse adaptive paths.</title>
        <authorList>
            <person name="Touchon M."/>
            <person name="Hoede C."/>
            <person name="Tenaillon O."/>
            <person name="Barbe V."/>
            <person name="Baeriswyl S."/>
            <person name="Bidet P."/>
            <person name="Bingen E."/>
            <person name="Bonacorsi S."/>
            <person name="Bouchier C."/>
            <person name="Bouvet O."/>
            <person name="Calteau A."/>
            <person name="Chiapello H."/>
            <person name="Clermont O."/>
            <person name="Cruveiller S."/>
            <person name="Danchin A."/>
            <person name="Diard M."/>
            <person name="Dossat C."/>
            <person name="Karoui M.E."/>
            <person name="Frapy E."/>
            <person name="Garry L."/>
            <person name="Ghigo J.M."/>
            <person name="Gilles A.M."/>
            <person name="Johnson J."/>
            <person name="Le Bouguenec C."/>
            <person name="Lescat M."/>
            <person name="Mangenot S."/>
            <person name="Martinez-Jehanne V."/>
            <person name="Matic I."/>
            <person name="Nassif X."/>
            <person name="Oztas S."/>
            <person name="Petit M.A."/>
            <person name="Pichon C."/>
            <person name="Rouy Z."/>
            <person name="Ruf C.S."/>
            <person name="Schneider D."/>
            <person name="Tourret J."/>
            <person name="Vacherie B."/>
            <person name="Vallenet D."/>
            <person name="Medigue C."/>
            <person name="Rocha E.P.C."/>
            <person name="Denamur E."/>
        </authorList>
    </citation>
    <scope>NUCLEOTIDE SEQUENCE [LARGE SCALE GENOMIC DNA]</scope>
    <source>
        <strain>S88 / ExPEC</strain>
    </source>
</reference>
<proteinExistence type="inferred from homology"/>
<accession>B7MLQ2</accession>
<dbReference type="EMBL" id="CU928161">
    <property type="protein sequence ID" value="CAR05982.1"/>
    <property type="molecule type" value="Genomic_DNA"/>
</dbReference>
<dbReference type="RefSeq" id="WP_000148581.1">
    <property type="nucleotide sequence ID" value="NC_011742.1"/>
</dbReference>
<dbReference type="SMR" id="B7MLQ2"/>
<dbReference type="GeneID" id="93777580"/>
<dbReference type="KEGG" id="ecz:ECS88_4834"/>
<dbReference type="HOGENOM" id="CLU_128576_0_0_6"/>
<dbReference type="Proteomes" id="UP000000747">
    <property type="component" value="Chromosome"/>
</dbReference>
<dbReference type="GO" id="GO:0009347">
    <property type="term" value="C:aspartate carbamoyltransferase complex"/>
    <property type="evidence" value="ECO:0007669"/>
    <property type="project" value="InterPro"/>
</dbReference>
<dbReference type="GO" id="GO:0046872">
    <property type="term" value="F:metal ion binding"/>
    <property type="evidence" value="ECO:0007669"/>
    <property type="project" value="UniProtKB-KW"/>
</dbReference>
<dbReference type="GO" id="GO:0006207">
    <property type="term" value="P:'de novo' pyrimidine nucleobase biosynthetic process"/>
    <property type="evidence" value="ECO:0007669"/>
    <property type="project" value="InterPro"/>
</dbReference>
<dbReference type="GO" id="GO:0006221">
    <property type="term" value="P:pyrimidine nucleotide biosynthetic process"/>
    <property type="evidence" value="ECO:0007669"/>
    <property type="project" value="UniProtKB-UniRule"/>
</dbReference>
<dbReference type="FunFam" id="2.30.30.20:FF:000001">
    <property type="entry name" value="Aspartate carbamoyltransferase regulatory chain"/>
    <property type="match status" value="1"/>
</dbReference>
<dbReference type="FunFam" id="3.30.70.140:FF:000001">
    <property type="entry name" value="Aspartate carbamoyltransferase regulatory chain"/>
    <property type="match status" value="1"/>
</dbReference>
<dbReference type="Gene3D" id="2.30.30.20">
    <property type="entry name" value="Aspartate carbamoyltransferase regulatory subunit, C-terminal domain"/>
    <property type="match status" value="1"/>
</dbReference>
<dbReference type="Gene3D" id="3.30.70.140">
    <property type="entry name" value="Aspartate carbamoyltransferase regulatory subunit, N-terminal domain"/>
    <property type="match status" value="1"/>
</dbReference>
<dbReference type="HAMAP" id="MF_00002">
    <property type="entry name" value="Asp_carb_tr_reg"/>
    <property type="match status" value="1"/>
</dbReference>
<dbReference type="InterPro" id="IPR020545">
    <property type="entry name" value="Asp_carbamoyltransf_reg_N"/>
</dbReference>
<dbReference type="InterPro" id="IPR002801">
    <property type="entry name" value="Asp_carbamoylTrfase_reg"/>
</dbReference>
<dbReference type="InterPro" id="IPR020542">
    <property type="entry name" value="Asp_carbamoyltrfase_reg_C"/>
</dbReference>
<dbReference type="InterPro" id="IPR036792">
    <property type="entry name" value="Asp_carbatrfase_reg_C_sf"/>
</dbReference>
<dbReference type="InterPro" id="IPR036793">
    <property type="entry name" value="Asp_carbatrfase_reg_N_sf"/>
</dbReference>
<dbReference type="NCBIfam" id="TIGR00240">
    <property type="entry name" value="ATCase_reg"/>
    <property type="match status" value="1"/>
</dbReference>
<dbReference type="PANTHER" id="PTHR35805">
    <property type="entry name" value="ASPARTATE CARBAMOYLTRANSFERASE REGULATORY CHAIN"/>
    <property type="match status" value="1"/>
</dbReference>
<dbReference type="PANTHER" id="PTHR35805:SF1">
    <property type="entry name" value="ASPARTATE CARBAMOYLTRANSFERASE REGULATORY CHAIN"/>
    <property type="match status" value="1"/>
</dbReference>
<dbReference type="Pfam" id="PF01948">
    <property type="entry name" value="PyrI"/>
    <property type="match status" value="1"/>
</dbReference>
<dbReference type="Pfam" id="PF02748">
    <property type="entry name" value="PyrI_C"/>
    <property type="match status" value="1"/>
</dbReference>
<dbReference type="SUPFAM" id="SSF57825">
    <property type="entry name" value="Aspartate carbamoyltransferase, Regulatory-chain, C-terminal domain"/>
    <property type="match status" value="1"/>
</dbReference>
<dbReference type="SUPFAM" id="SSF54893">
    <property type="entry name" value="Aspartate carbamoyltransferase, Regulatory-chain, N-terminal domain"/>
    <property type="match status" value="1"/>
</dbReference>
<comment type="function">
    <text evidence="1">Involved in allosteric regulation of aspartate carbamoyltransferase.</text>
</comment>
<comment type="cofactor">
    <cofactor evidence="1">
        <name>Zn(2+)</name>
        <dbReference type="ChEBI" id="CHEBI:29105"/>
    </cofactor>
    <text evidence="1">Binds 1 zinc ion per subunit.</text>
</comment>
<comment type="subunit">
    <text evidence="1">Contains catalytic and regulatory chains.</text>
</comment>
<comment type="similarity">
    <text evidence="1">Belongs to the PyrI family.</text>
</comment>
<evidence type="ECO:0000255" key="1">
    <source>
        <dbReference type="HAMAP-Rule" id="MF_00002"/>
    </source>
</evidence>
<feature type="chain" id="PRO_1000193110" description="Aspartate carbamoyltransferase regulatory chain">
    <location>
        <begin position="1"/>
        <end position="153"/>
    </location>
</feature>
<feature type="binding site" evidence="1">
    <location>
        <position position="109"/>
    </location>
    <ligand>
        <name>Zn(2+)</name>
        <dbReference type="ChEBI" id="CHEBI:29105"/>
    </ligand>
</feature>
<feature type="binding site" evidence="1">
    <location>
        <position position="114"/>
    </location>
    <ligand>
        <name>Zn(2+)</name>
        <dbReference type="ChEBI" id="CHEBI:29105"/>
    </ligand>
</feature>
<feature type="binding site" evidence="1">
    <location>
        <position position="138"/>
    </location>
    <ligand>
        <name>Zn(2+)</name>
        <dbReference type="ChEBI" id="CHEBI:29105"/>
    </ligand>
</feature>
<feature type="binding site" evidence="1">
    <location>
        <position position="141"/>
    </location>
    <ligand>
        <name>Zn(2+)</name>
        <dbReference type="ChEBI" id="CHEBI:29105"/>
    </ligand>
</feature>
<sequence>MTHDNKLQVEAIKRGTVIDHIPAQIGFKLLSLFKLTETDQRITIGLNLPSGEMGRKDLIKIENTFLSEDQVDQLALYAPQATVNRIDNYEVVGKSRPSLPERIDNVLVCPNSNCISHAEPVSSSFAVRKRANDIALKCKYCEKEFSHNVVLAN</sequence>
<keyword id="KW-0479">Metal-binding</keyword>
<keyword id="KW-0665">Pyrimidine biosynthesis</keyword>
<keyword id="KW-1185">Reference proteome</keyword>
<keyword id="KW-0862">Zinc</keyword>